<sequence length="299" mass="33863">MQNELDAYFEYLRSARQLSGHSLDAYRRDLDKVLTYCERERIAGWRDLQGRHLRHLIAEQHRQGQSSRSLARLLSSVRGLYRYLNQEGLCEHDPATGLSAPKGERRLPRLLDTDRAMQLLDGGVEDDFIARRDQAMLELFYSSGLRLSELVGLNLDQLDLAAGLVRVLGKGNKVRELPVGSKAREALQAWLPLRTLAGPADGAVFIGQQGRRLGARAVQLRVRQAGVRELGQHLHPHMLRHSFASHLLESSQDLRSVQELLGHADIGTTQIYTHLDFQHLAKVYDHAHPRAKRKQDTDT</sequence>
<dbReference type="EMBL" id="CP000304">
    <property type="protein sequence ID" value="ABP78214.1"/>
    <property type="molecule type" value="Genomic_DNA"/>
</dbReference>
<dbReference type="RefSeq" id="WP_011911741.1">
    <property type="nucleotide sequence ID" value="NC_009434.1"/>
</dbReference>
<dbReference type="SMR" id="A4VGW3"/>
<dbReference type="GeneID" id="66819768"/>
<dbReference type="KEGG" id="psa:PST_0508"/>
<dbReference type="eggNOG" id="COG4973">
    <property type="taxonomic scope" value="Bacteria"/>
</dbReference>
<dbReference type="HOGENOM" id="CLU_027562_9_0_6"/>
<dbReference type="Proteomes" id="UP000000233">
    <property type="component" value="Chromosome"/>
</dbReference>
<dbReference type="GO" id="GO:0005737">
    <property type="term" value="C:cytoplasm"/>
    <property type="evidence" value="ECO:0007669"/>
    <property type="project" value="UniProtKB-SubCell"/>
</dbReference>
<dbReference type="GO" id="GO:0003677">
    <property type="term" value="F:DNA binding"/>
    <property type="evidence" value="ECO:0007669"/>
    <property type="project" value="UniProtKB-KW"/>
</dbReference>
<dbReference type="GO" id="GO:0009037">
    <property type="term" value="F:tyrosine-based site-specific recombinase activity"/>
    <property type="evidence" value="ECO:0007669"/>
    <property type="project" value="UniProtKB-UniRule"/>
</dbReference>
<dbReference type="GO" id="GO:0051301">
    <property type="term" value="P:cell division"/>
    <property type="evidence" value="ECO:0007669"/>
    <property type="project" value="UniProtKB-KW"/>
</dbReference>
<dbReference type="GO" id="GO:0007059">
    <property type="term" value="P:chromosome segregation"/>
    <property type="evidence" value="ECO:0007669"/>
    <property type="project" value="UniProtKB-UniRule"/>
</dbReference>
<dbReference type="GO" id="GO:0006313">
    <property type="term" value="P:DNA transposition"/>
    <property type="evidence" value="ECO:0007669"/>
    <property type="project" value="UniProtKB-UniRule"/>
</dbReference>
<dbReference type="CDD" id="cd00798">
    <property type="entry name" value="INT_XerDC_C"/>
    <property type="match status" value="1"/>
</dbReference>
<dbReference type="Gene3D" id="1.10.150.130">
    <property type="match status" value="1"/>
</dbReference>
<dbReference type="Gene3D" id="1.10.443.10">
    <property type="entry name" value="Intergrase catalytic core"/>
    <property type="match status" value="1"/>
</dbReference>
<dbReference type="HAMAP" id="MF_01808">
    <property type="entry name" value="Recomb_XerC_XerD"/>
    <property type="match status" value="1"/>
</dbReference>
<dbReference type="InterPro" id="IPR044068">
    <property type="entry name" value="CB"/>
</dbReference>
<dbReference type="InterPro" id="IPR011010">
    <property type="entry name" value="DNA_brk_join_enz"/>
</dbReference>
<dbReference type="InterPro" id="IPR013762">
    <property type="entry name" value="Integrase-like_cat_sf"/>
</dbReference>
<dbReference type="InterPro" id="IPR002104">
    <property type="entry name" value="Integrase_catalytic"/>
</dbReference>
<dbReference type="InterPro" id="IPR010998">
    <property type="entry name" value="Integrase_recombinase_N"/>
</dbReference>
<dbReference type="InterPro" id="IPR004107">
    <property type="entry name" value="Integrase_SAM-like_N"/>
</dbReference>
<dbReference type="InterPro" id="IPR011931">
    <property type="entry name" value="Recomb_XerC"/>
</dbReference>
<dbReference type="InterPro" id="IPR023009">
    <property type="entry name" value="Tyrosine_recombinase_XerC/XerD"/>
</dbReference>
<dbReference type="InterPro" id="IPR050090">
    <property type="entry name" value="Tyrosine_recombinase_XerCD"/>
</dbReference>
<dbReference type="NCBIfam" id="TIGR02224">
    <property type="entry name" value="recomb_XerC"/>
    <property type="match status" value="1"/>
</dbReference>
<dbReference type="PANTHER" id="PTHR30349">
    <property type="entry name" value="PHAGE INTEGRASE-RELATED"/>
    <property type="match status" value="1"/>
</dbReference>
<dbReference type="PANTHER" id="PTHR30349:SF81">
    <property type="entry name" value="TYROSINE RECOMBINASE XERC"/>
    <property type="match status" value="1"/>
</dbReference>
<dbReference type="Pfam" id="PF02899">
    <property type="entry name" value="Phage_int_SAM_1"/>
    <property type="match status" value="1"/>
</dbReference>
<dbReference type="Pfam" id="PF00589">
    <property type="entry name" value="Phage_integrase"/>
    <property type="match status" value="1"/>
</dbReference>
<dbReference type="SUPFAM" id="SSF56349">
    <property type="entry name" value="DNA breaking-rejoining enzymes"/>
    <property type="match status" value="1"/>
</dbReference>
<dbReference type="SUPFAM" id="SSF47823">
    <property type="entry name" value="lambda integrase-like, N-terminal domain"/>
    <property type="match status" value="1"/>
</dbReference>
<dbReference type="PROSITE" id="PS51900">
    <property type="entry name" value="CB"/>
    <property type="match status" value="1"/>
</dbReference>
<dbReference type="PROSITE" id="PS51898">
    <property type="entry name" value="TYR_RECOMBINASE"/>
    <property type="match status" value="1"/>
</dbReference>
<evidence type="ECO:0000255" key="1">
    <source>
        <dbReference type="HAMAP-Rule" id="MF_01808"/>
    </source>
</evidence>
<evidence type="ECO:0000255" key="2">
    <source>
        <dbReference type="PROSITE-ProRule" id="PRU01246"/>
    </source>
</evidence>
<evidence type="ECO:0000255" key="3">
    <source>
        <dbReference type="PROSITE-ProRule" id="PRU01248"/>
    </source>
</evidence>
<protein>
    <recommendedName>
        <fullName evidence="1">Tyrosine recombinase XerC</fullName>
    </recommendedName>
</protein>
<gene>
    <name evidence="1" type="primary">xerC</name>
    <name type="ordered locus">PST_0508</name>
</gene>
<keyword id="KW-0131">Cell cycle</keyword>
<keyword id="KW-0132">Cell division</keyword>
<keyword id="KW-0159">Chromosome partition</keyword>
<keyword id="KW-0963">Cytoplasm</keyword>
<keyword id="KW-0229">DNA integration</keyword>
<keyword id="KW-0233">DNA recombination</keyword>
<keyword id="KW-0238">DNA-binding</keyword>
<keyword id="KW-1185">Reference proteome</keyword>
<proteinExistence type="inferred from homology"/>
<reference key="1">
    <citation type="journal article" date="2008" name="Proc. Natl. Acad. Sci. U.S.A.">
        <title>Nitrogen fixation island and rhizosphere competence traits in the genome of root-associated Pseudomonas stutzeri A1501.</title>
        <authorList>
            <person name="Yan Y."/>
            <person name="Yang J."/>
            <person name="Dou Y."/>
            <person name="Chen M."/>
            <person name="Ping S."/>
            <person name="Peng J."/>
            <person name="Lu W."/>
            <person name="Zhang W."/>
            <person name="Yao Z."/>
            <person name="Li H."/>
            <person name="Liu W."/>
            <person name="He S."/>
            <person name="Geng L."/>
            <person name="Zhang X."/>
            <person name="Yang F."/>
            <person name="Yu H."/>
            <person name="Zhan Y."/>
            <person name="Li D."/>
            <person name="Lin Z."/>
            <person name="Wang Y."/>
            <person name="Elmerich C."/>
            <person name="Lin M."/>
            <person name="Jin Q."/>
        </authorList>
    </citation>
    <scope>NUCLEOTIDE SEQUENCE [LARGE SCALE GENOMIC DNA]</scope>
    <source>
        <strain>A1501</strain>
    </source>
</reference>
<feature type="chain" id="PRO_1000070031" description="Tyrosine recombinase XerC">
    <location>
        <begin position="1"/>
        <end position="299"/>
    </location>
</feature>
<feature type="domain" description="Core-binding (CB)" evidence="3">
    <location>
        <begin position="1"/>
        <end position="85"/>
    </location>
</feature>
<feature type="domain" description="Tyr recombinase" evidence="2">
    <location>
        <begin position="106"/>
        <end position="285"/>
    </location>
</feature>
<feature type="active site" evidence="1">
    <location>
        <position position="146"/>
    </location>
</feature>
<feature type="active site" evidence="1">
    <location>
        <position position="170"/>
    </location>
</feature>
<feature type="active site" evidence="1">
    <location>
        <position position="237"/>
    </location>
</feature>
<feature type="active site" evidence="1">
    <location>
        <position position="240"/>
    </location>
</feature>
<feature type="active site" evidence="1">
    <location>
        <position position="263"/>
    </location>
</feature>
<feature type="active site" description="O-(3'-phospho-DNA)-tyrosine intermediate" evidence="1">
    <location>
        <position position="272"/>
    </location>
</feature>
<comment type="function">
    <text evidence="1">Site-specific tyrosine recombinase, which acts by catalyzing the cutting and rejoining of the recombining DNA molecules. The XerC-XerD complex is essential to convert dimers of the bacterial chromosome into monomers to permit their segregation at cell division. It also contributes to the segregational stability of plasmids.</text>
</comment>
<comment type="subunit">
    <text evidence="1">Forms a cyclic heterotetrameric complex composed of two molecules of XerC and two molecules of XerD.</text>
</comment>
<comment type="subcellular location">
    <subcellularLocation>
        <location evidence="1">Cytoplasm</location>
    </subcellularLocation>
</comment>
<comment type="similarity">
    <text evidence="1">Belongs to the 'phage' integrase family. XerC subfamily.</text>
</comment>
<name>XERC_STUS1</name>
<organism>
    <name type="scientific">Stutzerimonas stutzeri (strain A1501)</name>
    <name type="common">Pseudomonas stutzeri</name>
    <dbReference type="NCBI Taxonomy" id="379731"/>
    <lineage>
        <taxon>Bacteria</taxon>
        <taxon>Pseudomonadati</taxon>
        <taxon>Pseudomonadota</taxon>
        <taxon>Gammaproteobacteria</taxon>
        <taxon>Pseudomonadales</taxon>
        <taxon>Pseudomonadaceae</taxon>
        <taxon>Stutzerimonas</taxon>
    </lineage>
</organism>
<accession>A4VGW3</accession>